<keyword id="KW-0066">ATP synthesis</keyword>
<keyword id="KW-0375">Hydrogen ion transport</keyword>
<keyword id="KW-0406">Ion transport</keyword>
<keyword id="KW-1185">Reference proteome</keyword>
<keyword id="KW-0813">Transport</keyword>
<organism>
    <name type="scientific">Borrelia turicatae (strain 91E135)</name>
    <dbReference type="NCBI Taxonomy" id="314724"/>
    <lineage>
        <taxon>Bacteria</taxon>
        <taxon>Pseudomonadati</taxon>
        <taxon>Spirochaetota</taxon>
        <taxon>Spirochaetia</taxon>
        <taxon>Spirochaetales</taxon>
        <taxon>Borreliaceae</taxon>
        <taxon>Borrelia</taxon>
    </lineage>
</organism>
<name>VATE_BORT9</name>
<reference key="1">
    <citation type="submission" date="2004-12" db="EMBL/GenBank/DDBJ databases">
        <title>The genome sequence of Borrelia hermsii and Borrelia turicatae: comparative analysis of two agents of endemic N. America relapsing fever.</title>
        <authorList>
            <person name="Porcella S.F."/>
            <person name="Raffel S.J."/>
            <person name="Schrumpf M.E."/>
            <person name="Montgomery B."/>
            <person name="Smith T."/>
            <person name="Schwan T.G."/>
        </authorList>
    </citation>
    <scope>NUCLEOTIDE SEQUENCE [LARGE SCALE GENOMIC DNA]</scope>
    <source>
        <strain>91E135</strain>
    </source>
</reference>
<feature type="chain" id="PRO_1000132894" description="V-type proton ATPase subunit E">
    <location>
        <begin position="1"/>
        <end position="198"/>
    </location>
</feature>
<evidence type="ECO:0000255" key="1">
    <source>
        <dbReference type="HAMAP-Rule" id="MF_00311"/>
    </source>
</evidence>
<gene>
    <name evidence="1" type="primary">atpE</name>
    <name type="ordered locus">BT0096</name>
</gene>
<accession>A1QYP5</accession>
<dbReference type="EMBL" id="CP000049">
    <property type="protein sequence ID" value="AAX17437.1"/>
    <property type="molecule type" value="Genomic_DNA"/>
</dbReference>
<dbReference type="RefSeq" id="WP_011772056.1">
    <property type="nucleotide sequence ID" value="NZ_CP073176.1"/>
</dbReference>
<dbReference type="SMR" id="A1QYP5"/>
<dbReference type="KEGG" id="btu:BT0096"/>
<dbReference type="eggNOG" id="COG1390">
    <property type="taxonomic scope" value="Bacteria"/>
</dbReference>
<dbReference type="HOGENOM" id="CLU_105793_0_1_12"/>
<dbReference type="Proteomes" id="UP000001205">
    <property type="component" value="Chromosome"/>
</dbReference>
<dbReference type="GO" id="GO:0033178">
    <property type="term" value="C:proton-transporting two-sector ATPase complex, catalytic domain"/>
    <property type="evidence" value="ECO:0007669"/>
    <property type="project" value="InterPro"/>
</dbReference>
<dbReference type="GO" id="GO:0005524">
    <property type="term" value="F:ATP binding"/>
    <property type="evidence" value="ECO:0007669"/>
    <property type="project" value="UniProtKB-UniRule"/>
</dbReference>
<dbReference type="GO" id="GO:0046933">
    <property type="term" value="F:proton-transporting ATP synthase activity, rotational mechanism"/>
    <property type="evidence" value="ECO:0007669"/>
    <property type="project" value="UniProtKB-UniRule"/>
</dbReference>
<dbReference type="GO" id="GO:0046961">
    <property type="term" value="F:proton-transporting ATPase activity, rotational mechanism"/>
    <property type="evidence" value="ECO:0007669"/>
    <property type="project" value="InterPro"/>
</dbReference>
<dbReference type="GO" id="GO:0042777">
    <property type="term" value="P:proton motive force-driven plasma membrane ATP synthesis"/>
    <property type="evidence" value="ECO:0007669"/>
    <property type="project" value="UniProtKB-UniRule"/>
</dbReference>
<dbReference type="Gene3D" id="1.20.5.2950">
    <property type="match status" value="1"/>
</dbReference>
<dbReference type="HAMAP" id="MF_00311">
    <property type="entry name" value="ATP_synth_E_arch"/>
    <property type="match status" value="1"/>
</dbReference>
<dbReference type="InterPro" id="IPR002842">
    <property type="entry name" value="ATPase_V1_Esu"/>
</dbReference>
<dbReference type="NCBIfam" id="NF002424">
    <property type="entry name" value="PRK01558.1"/>
    <property type="match status" value="1"/>
</dbReference>
<dbReference type="SUPFAM" id="SSF160527">
    <property type="entry name" value="V-type ATPase subunit E-like"/>
    <property type="match status" value="1"/>
</dbReference>
<comment type="function">
    <text evidence="1">Produces ATP from ADP in the presence of a proton gradient across the membrane.</text>
</comment>
<comment type="similarity">
    <text evidence="1">Belongs to the V-ATPase E subunit family.</text>
</comment>
<sequence length="198" mass="22771">MQFEVKDLINKIKKDGLEEAEKLANEIILNAKRDAEAIVLKAESDAKDLKMQAEAEANEYKRYSLEASRQAVRDLIIGTEKNIKSLFKTALKDSVSRVYDDNFLRDLIIKVVDIWSKNDKIDIMLNESDFSNLLSVLRAKIGNRLDDAIEIKPFKGISKGFTIQQRDGNLYYDFTSETVADILFEYLNPRFKEVIKLI</sequence>
<proteinExistence type="inferred from homology"/>
<protein>
    <recommendedName>
        <fullName evidence="1">V-type proton ATPase subunit E</fullName>
    </recommendedName>
    <alternativeName>
        <fullName evidence="1">V-ATPase subunit E</fullName>
    </alternativeName>
</protein>